<accession>B0BVY1</accession>
<comment type="function">
    <text evidence="1">Binds as a heterodimer with protein bS6 to the central domain of the 16S rRNA, where it helps stabilize the platform of the 30S subunit.</text>
</comment>
<comment type="subunit">
    <text evidence="1">Part of the 30S ribosomal subunit. Forms a tight heterodimer with protein bS6.</text>
</comment>
<comment type="similarity">
    <text evidence="1">Belongs to the bacterial ribosomal protein bS18 family.</text>
</comment>
<sequence>MLKSNNASETAAHKVGDKTAKKVFFRRRKGCPLSVPNAPVIDYKNPELLIKFVSEGGRMLPSRITNVCAKKQRKLNNAIKIARILALLPFVFQAK</sequence>
<protein>
    <recommendedName>
        <fullName evidence="1">Small ribosomal subunit protein bS18</fullName>
    </recommendedName>
    <alternativeName>
        <fullName evidence="2">30S ribosomal protein S18</fullName>
    </alternativeName>
</protein>
<reference key="1">
    <citation type="journal article" date="2008" name="Infect. Immun.">
        <title>Genomic comparison of virulent Rickettsia rickettsii Sheila Smith and avirulent Rickettsia rickettsii Iowa.</title>
        <authorList>
            <person name="Ellison D.W."/>
            <person name="Clark T.R."/>
            <person name="Sturdevant D.E."/>
            <person name="Virtaneva K."/>
            <person name="Porcella S.F."/>
            <person name="Hackstadt T."/>
        </authorList>
    </citation>
    <scope>NUCLEOTIDE SEQUENCE [LARGE SCALE GENOMIC DNA]</scope>
    <source>
        <strain>Iowa</strain>
    </source>
</reference>
<name>RS18_RICRO</name>
<keyword id="KW-0687">Ribonucleoprotein</keyword>
<keyword id="KW-0689">Ribosomal protein</keyword>
<keyword id="KW-0694">RNA-binding</keyword>
<keyword id="KW-0699">rRNA-binding</keyword>
<dbReference type="EMBL" id="CP000766">
    <property type="protein sequence ID" value="ABY72007.1"/>
    <property type="molecule type" value="Genomic_DNA"/>
</dbReference>
<dbReference type="RefSeq" id="WP_004996865.1">
    <property type="nucleotide sequence ID" value="NC_010263.3"/>
</dbReference>
<dbReference type="SMR" id="B0BVY1"/>
<dbReference type="GeneID" id="95361797"/>
<dbReference type="KEGG" id="rrj:RrIowa_0085"/>
<dbReference type="eggNOG" id="COG0238">
    <property type="taxonomic scope" value="Bacteria"/>
</dbReference>
<dbReference type="HOGENOM" id="CLU_148710_2_1_5"/>
<dbReference type="Proteomes" id="UP000000796">
    <property type="component" value="Chromosome"/>
</dbReference>
<dbReference type="GO" id="GO:0022627">
    <property type="term" value="C:cytosolic small ribosomal subunit"/>
    <property type="evidence" value="ECO:0007669"/>
    <property type="project" value="TreeGrafter"/>
</dbReference>
<dbReference type="GO" id="GO:0070181">
    <property type="term" value="F:small ribosomal subunit rRNA binding"/>
    <property type="evidence" value="ECO:0007669"/>
    <property type="project" value="TreeGrafter"/>
</dbReference>
<dbReference type="GO" id="GO:0003735">
    <property type="term" value="F:structural constituent of ribosome"/>
    <property type="evidence" value="ECO:0007669"/>
    <property type="project" value="InterPro"/>
</dbReference>
<dbReference type="GO" id="GO:0006412">
    <property type="term" value="P:translation"/>
    <property type="evidence" value="ECO:0007669"/>
    <property type="project" value="UniProtKB-UniRule"/>
</dbReference>
<dbReference type="Gene3D" id="4.10.640.10">
    <property type="entry name" value="Ribosomal protein S18"/>
    <property type="match status" value="1"/>
</dbReference>
<dbReference type="HAMAP" id="MF_00270">
    <property type="entry name" value="Ribosomal_bS18"/>
    <property type="match status" value="1"/>
</dbReference>
<dbReference type="InterPro" id="IPR001648">
    <property type="entry name" value="Ribosomal_bS18"/>
</dbReference>
<dbReference type="InterPro" id="IPR018275">
    <property type="entry name" value="Ribosomal_bS18_CS"/>
</dbReference>
<dbReference type="InterPro" id="IPR036870">
    <property type="entry name" value="Ribosomal_bS18_sf"/>
</dbReference>
<dbReference type="NCBIfam" id="TIGR00165">
    <property type="entry name" value="S18"/>
    <property type="match status" value="1"/>
</dbReference>
<dbReference type="PANTHER" id="PTHR13479">
    <property type="entry name" value="30S RIBOSOMAL PROTEIN S18"/>
    <property type="match status" value="1"/>
</dbReference>
<dbReference type="PANTHER" id="PTHR13479:SF40">
    <property type="entry name" value="SMALL RIBOSOMAL SUBUNIT PROTEIN BS18M"/>
    <property type="match status" value="1"/>
</dbReference>
<dbReference type="Pfam" id="PF01084">
    <property type="entry name" value="Ribosomal_S18"/>
    <property type="match status" value="1"/>
</dbReference>
<dbReference type="PRINTS" id="PR00974">
    <property type="entry name" value="RIBOSOMALS18"/>
</dbReference>
<dbReference type="SUPFAM" id="SSF46911">
    <property type="entry name" value="Ribosomal protein S18"/>
    <property type="match status" value="1"/>
</dbReference>
<dbReference type="PROSITE" id="PS00057">
    <property type="entry name" value="RIBOSOMAL_S18"/>
    <property type="match status" value="1"/>
</dbReference>
<evidence type="ECO:0000255" key="1">
    <source>
        <dbReference type="HAMAP-Rule" id="MF_00270"/>
    </source>
</evidence>
<evidence type="ECO:0000305" key="2"/>
<gene>
    <name evidence="1" type="primary">rpsR</name>
    <name type="ordered locus">RrIowa_0085</name>
</gene>
<organism>
    <name type="scientific">Rickettsia rickettsii (strain Iowa)</name>
    <dbReference type="NCBI Taxonomy" id="452659"/>
    <lineage>
        <taxon>Bacteria</taxon>
        <taxon>Pseudomonadati</taxon>
        <taxon>Pseudomonadota</taxon>
        <taxon>Alphaproteobacteria</taxon>
        <taxon>Rickettsiales</taxon>
        <taxon>Rickettsiaceae</taxon>
        <taxon>Rickettsieae</taxon>
        <taxon>Rickettsia</taxon>
        <taxon>spotted fever group</taxon>
    </lineage>
</organism>
<proteinExistence type="inferred from homology"/>
<feature type="chain" id="PRO_1000078709" description="Small ribosomal subunit protein bS18">
    <location>
        <begin position="1"/>
        <end position="95"/>
    </location>
</feature>